<name>TXC10_CUPSA</name>
<comment type="function">
    <text evidence="2">Spider venom toxin that shows calcium channel blocking activity and exhibits cytolytic activity by affecting the outer leaflet curvature and/or pore formation across the membrane. It blocks L-type calcium channels (Cav1/CACNA1) in mammalian neurons at nanomolar concentrations. Furthermore, it produces a slow voltage-independent block of mid/low and high voltage-activated calcium channels in cockroach neurons. Potassium ions, histamine, M-ctenitoxin-Cs1a (AC P83619), CSTX-9 (AC P58604), and CSTX-13 (AC P83919) synergistically increase the insecticidal activity of this toxin. In vivo, it causes paralysis in blow flies and provokes death in drosophila.</text>
</comment>
<comment type="subcellular location">
    <subcellularLocation>
        <location evidence="4">Secreted</location>
    </subcellularLocation>
    <subcellularLocation>
        <location evidence="2">Target cell membrane</location>
    </subcellularLocation>
</comment>
<comment type="tissue specificity">
    <text evidence="6">Expressed by the venom gland.</text>
</comment>
<comment type="domain">
    <text evidence="1">The presence of a 'disulfide through disulfide knot' structurally defines this protein as a knottin.</text>
</comment>
<comment type="mass spectrometry" mass="8095.806" method="Electrospray" evidence="4"/>
<comment type="similarity">
    <text evidence="3">Belongs to the neurotoxin 19 (CSTX) family.</text>
</comment>
<organism>
    <name type="scientific">Cupiennius salei</name>
    <name type="common">American wandering spider</name>
    <dbReference type="NCBI Taxonomy" id="6928"/>
    <lineage>
        <taxon>Eukaryota</taxon>
        <taxon>Metazoa</taxon>
        <taxon>Ecdysozoa</taxon>
        <taxon>Arthropoda</taxon>
        <taxon>Chelicerata</taxon>
        <taxon>Arachnida</taxon>
        <taxon>Araneae</taxon>
        <taxon>Araneomorphae</taxon>
        <taxon>Entelegynae</taxon>
        <taxon>Lycosoidea</taxon>
        <taxon>Ctenidae</taxon>
        <taxon>Cupiennius</taxon>
    </lineage>
</organism>
<sequence length="116" mass="13406">MKVLVIFAVLSLVIFSNCSAETDEDFFGEESFEADDIIPFIAKEQVRKDKENCIGKHHECTDDRDNCCKGKLFRYQCQCFKVIDGKKETKRCACVTPLHYKMAEMAVSVFKKMFKN</sequence>
<evidence type="ECO:0000250" key="1">
    <source>
        <dbReference type="UniProtKB" id="P58604"/>
    </source>
</evidence>
<evidence type="ECO:0000250" key="2">
    <source>
        <dbReference type="UniProtKB" id="P81694"/>
    </source>
</evidence>
<evidence type="ECO:0000255" key="3"/>
<evidence type="ECO:0000269" key="4">
    <source>
    </source>
</evidence>
<evidence type="ECO:0000303" key="5">
    <source>
    </source>
</evidence>
<evidence type="ECO:0000305" key="6">
    <source>
    </source>
</evidence>
<proteinExistence type="evidence at protein level"/>
<dbReference type="EMBL" id="MH754560">
    <property type="protein sequence ID" value="QDC23095.1"/>
    <property type="molecule type" value="mRNA"/>
</dbReference>
<dbReference type="EMBL" id="MH754561">
    <property type="protein sequence ID" value="QDC23096.1"/>
    <property type="molecule type" value="mRNA"/>
</dbReference>
<dbReference type="SMR" id="B3EWT0"/>
<dbReference type="GO" id="GO:0005576">
    <property type="term" value="C:extracellular region"/>
    <property type="evidence" value="ECO:0007669"/>
    <property type="project" value="UniProtKB-SubCell"/>
</dbReference>
<dbReference type="GO" id="GO:0016020">
    <property type="term" value="C:membrane"/>
    <property type="evidence" value="ECO:0007669"/>
    <property type="project" value="UniProtKB-KW"/>
</dbReference>
<dbReference type="GO" id="GO:0044218">
    <property type="term" value="C:other organism cell membrane"/>
    <property type="evidence" value="ECO:0007669"/>
    <property type="project" value="UniProtKB-KW"/>
</dbReference>
<dbReference type="GO" id="GO:0005246">
    <property type="term" value="F:calcium channel regulator activity"/>
    <property type="evidence" value="ECO:0007669"/>
    <property type="project" value="UniProtKB-KW"/>
</dbReference>
<dbReference type="GO" id="GO:0090729">
    <property type="term" value="F:toxin activity"/>
    <property type="evidence" value="ECO:0007669"/>
    <property type="project" value="UniProtKB-KW"/>
</dbReference>
<dbReference type="GO" id="GO:0031640">
    <property type="term" value="P:killing of cells of another organism"/>
    <property type="evidence" value="ECO:0007669"/>
    <property type="project" value="UniProtKB-KW"/>
</dbReference>
<dbReference type="InterPro" id="IPR019553">
    <property type="entry name" value="Spider_toxin_CSTX_knottin"/>
</dbReference>
<dbReference type="InterPro" id="IPR011142">
    <property type="entry name" value="Spider_toxin_CSTX_Knottin_CS"/>
</dbReference>
<dbReference type="Pfam" id="PF10530">
    <property type="entry name" value="Toxin_35"/>
    <property type="match status" value="1"/>
</dbReference>
<dbReference type="PROSITE" id="PS60029">
    <property type="entry name" value="SPIDER_CSTX"/>
    <property type="match status" value="1"/>
</dbReference>
<feature type="signal peptide" evidence="3">
    <location>
        <begin position="1"/>
        <end position="20"/>
    </location>
</feature>
<feature type="propeptide" id="PRO_0000452336" evidence="6">
    <location>
        <begin position="21"/>
        <end position="47"/>
    </location>
</feature>
<feature type="peptide" id="PRO_0000421179" description="Toxin CSTX-10" evidence="4">
    <location>
        <begin position="48"/>
        <end position="116"/>
    </location>
</feature>
<feature type="disulfide bond" evidence="1">
    <location>
        <begin position="53"/>
        <end position="68"/>
    </location>
</feature>
<feature type="disulfide bond" evidence="1">
    <location>
        <begin position="60"/>
        <end position="77"/>
    </location>
</feature>
<feature type="disulfide bond" evidence="1">
    <location>
        <begin position="67"/>
        <end position="94"/>
    </location>
</feature>
<feature type="disulfide bond" evidence="1">
    <location>
        <begin position="79"/>
        <end position="92"/>
    </location>
</feature>
<accession>B3EWT0</accession>
<accession>A0A4Y5UGJ5</accession>
<keyword id="KW-0027">Amidation</keyword>
<keyword id="KW-0108">Calcium channel impairing toxin</keyword>
<keyword id="KW-0204">Cytolysis</keyword>
<keyword id="KW-0903">Direct protein sequencing</keyword>
<keyword id="KW-1015">Disulfide bond</keyword>
<keyword id="KW-0872">Ion channel impairing toxin</keyword>
<keyword id="KW-0960">Knottin</keyword>
<keyword id="KW-0472">Membrane</keyword>
<keyword id="KW-0528">Neurotoxin</keyword>
<keyword id="KW-0964">Secreted</keyword>
<keyword id="KW-0732">Signal</keyword>
<keyword id="KW-1052">Target cell membrane</keyword>
<keyword id="KW-1053">Target membrane</keyword>
<keyword id="KW-0800">Toxin</keyword>
<keyword id="KW-1218">Voltage-gated calcium channel impairing toxin</keyword>
<reference key="1">
    <citation type="journal article" date="2019" name="Toxins">
        <title>The dual prey-inactivation strategy of spiders-in-depth venomic analysis of Cupiennius salei.</title>
        <authorList>
            <person name="Kuhn-Nentwig L."/>
            <person name="Langenegger N."/>
            <person name="Heller M."/>
            <person name="Koua D."/>
            <person name="Nentwig W."/>
        </authorList>
    </citation>
    <scope>NUCLEOTIDE SEQUENCE [MRNA]</scope>
    <source>
        <tissue>Venom gland</tissue>
    </source>
</reference>
<reference key="2">
    <citation type="journal article" date="2012" name="FEBS J.">
        <title>Multicomponent venom of the spider Cupiennius salei: a bioanalytical investigation applying different strategies.</title>
        <authorList>
            <person name="Trachsel C."/>
            <person name="Siegemund D."/>
            <person name="Kampfer U."/>
            <person name="Kopp L.S."/>
            <person name="Buhr C."/>
            <person name="Grossmann J."/>
            <person name="Luthi C."/>
            <person name="Cunningham M."/>
            <person name="Nentwig W."/>
            <person name="Kuhn-Nentwig L."/>
            <person name="Schurch S."/>
            <person name="Schaller J."/>
        </authorList>
    </citation>
    <scope>PROTEIN SEQUENCE OF 48-116</scope>
    <scope>MASS SPECTROMETRY</scope>
    <scope>SUBCELLULAR LOCATION</scope>
    <source>
        <tissue>Venom</tissue>
    </source>
</reference>
<protein>
    <recommendedName>
        <fullName evidence="5">Toxin CSTX-10</fullName>
    </recommendedName>
</protein>